<organism evidence="7">
    <name type="scientific">Caenorhabditis elegans</name>
    <dbReference type="NCBI Taxonomy" id="6239"/>
    <lineage>
        <taxon>Eukaryota</taxon>
        <taxon>Metazoa</taxon>
        <taxon>Ecdysozoa</taxon>
        <taxon>Nematoda</taxon>
        <taxon>Chromadorea</taxon>
        <taxon>Rhabditida</taxon>
        <taxon>Rhabditina</taxon>
        <taxon>Rhabditomorpha</taxon>
        <taxon>Rhabditoidea</taxon>
        <taxon>Rhabditidae</taxon>
        <taxon>Peloderinae</taxon>
        <taxon>Caenorhabditis</taxon>
    </lineage>
</organism>
<keyword id="KW-0025">Alternative splicing</keyword>
<keyword id="KW-0963">Cytoplasm</keyword>
<keyword id="KW-0238">DNA-binding</keyword>
<keyword id="KW-0539">Nucleus</keyword>
<keyword id="KW-1185">Reference proteome</keyword>
<keyword id="KW-0678">Repressor</keyword>
<keyword id="KW-0804">Transcription</keyword>
<keyword id="KW-0805">Transcription regulation</keyword>
<protein>
    <recommendedName>
        <fullName evidence="5">Nuclear transcription factor Y subunit nfyc-1</fullName>
    </recommendedName>
    <alternativeName>
        <fullName evidence="5">CAAT box DNA-binding protein subunit nfyc-1</fullName>
    </alternativeName>
</protein>
<proteinExistence type="evidence at protein level"/>
<accession>O17072</accession>
<accession>A0A0K3AWV9</accession>
<dbReference type="EMBL" id="BX284602">
    <property type="protein sequence ID" value="CCD62352.1"/>
    <property type="molecule type" value="Genomic_DNA"/>
</dbReference>
<dbReference type="EMBL" id="BX284602">
    <property type="protein sequence ID" value="CTQ86476.1"/>
    <property type="molecule type" value="Genomic_DNA"/>
</dbReference>
<dbReference type="RefSeq" id="NP_001300537.1">
    <molecule id="O17072-2"/>
    <property type="nucleotide sequence ID" value="NM_001313608.3"/>
</dbReference>
<dbReference type="RefSeq" id="NP_493645.1">
    <molecule id="O17072-1"/>
    <property type="nucleotide sequence ID" value="NM_061244.8"/>
</dbReference>
<dbReference type="SMR" id="O17072"/>
<dbReference type="ComplexPortal" id="CPX-5666">
    <property type="entry name" value="CCAAT-binding factor complex, nfya-1 variant"/>
</dbReference>
<dbReference type="ComplexPortal" id="CPX-5667">
    <property type="entry name" value="CCAAT-binding factor complex, nfya-2 variant"/>
</dbReference>
<dbReference type="FunCoup" id="O17072">
    <property type="interactions" value="512"/>
</dbReference>
<dbReference type="IntAct" id="O17072">
    <property type="interactions" value="12"/>
</dbReference>
<dbReference type="STRING" id="6239.F23F1.1a.2"/>
<dbReference type="PaxDb" id="6239-F23F1.1"/>
<dbReference type="PeptideAtlas" id="O17072"/>
<dbReference type="EnsemblMetazoa" id="F23F1.1a.1">
    <molecule id="O17072-1"/>
    <property type="protein sequence ID" value="F23F1.1a.1"/>
    <property type="gene ID" value="WBGene00017742"/>
</dbReference>
<dbReference type="EnsemblMetazoa" id="F23F1.1b.1">
    <molecule id="O17072-2"/>
    <property type="protein sequence ID" value="F23F1.1b.1"/>
    <property type="gene ID" value="WBGene00017742"/>
</dbReference>
<dbReference type="GeneID" id="173385"/>
<dbReference type="KEGG" id="cel:CELE_F23F1.1"/>
<dbReference type="UCSC" id="F23F1.1">
    <molecule id="O17072-1"/>
    <property type="organism name" value="c. elegans"/>
</dbReference>
<dbReference type="AGR" id="WB:WBGene00017742"/>
<dbReference type="CTD" id="173385"/>
<dbReference type="WormBase" id="F23F1.1a">
    <molecule id="O17072-1"/>
    <property type="protein sequence ID" value="CE27996"/>
    <property type="gene ID" value="WBGene00017742"/>
    <property type="gene designation" value="nfyc-1"/>
</dbReference>
<dbReference type="WormBase" id="F23F1.1b">
    <molecule id="O17072-2"/>
    <property type="protein sequence ID" value="CE50568"/>
    <property type="gene ID" value="WBGene00017742"/>
    <property type="gene designation" value="nfyc-1"/>
</dbReference>
<dbReference type="eggNOG" id="KOG1657">
    <property type="taxonomic scope" value="Eukaryota"/>
</dbReference>
<dbReference type="GeneTree" id="ENSGT00940000155689"/>
<dbReference type="HOGENOM" id="CLU_1195785_0_0_1"/>
<dbReference type="InParanoid" id="O17072"/>
<dbReference type="OrthoDB" id="1272441at2759"/>
<dbReference type="PhylomeDB" id="O17072"/>
<dbReference type="SignaLink" id="O17072"/>
<dbReference type="PRO" id="PR:O17072"/>
<dbReference type="Proteomes" id="UP000001940">
    <property type="component" value="Chromosome II"/>
</dbReference>
<dbReference type="Bgee" id="WBGene00017742">
    <property type="expression patterns" value="Expressed in germ line (C elegans) and 4 other cell types or tissues"/>
</dbReference>
<dbReference type="ExpressionAtlas" id="O17072">
    <property type="expression patterns" value="baseline and differential"/>
</dbReference>
<dbReference type="GO" id="GO:0016602">
    <property type="term" value="C:CCAAT-binding factor complex"/>
    <property type="evidence" value="ECO:0000353"/>
    <property type="project" value="ComplexPortal"/>
</dbReference>
<dbReference type="GO" id="GO:0005737">
    <property type="term" value="C:cytoplasm"/>
    <property type="evidence" value="ECO:0000314"/>
    <property type="project" value="UniProtKB"/>
</dbReference>
<dbReference type="GO" id="GO:0005634">
    <property type="term" value="C:nucleus"/>
    <property type="evidence" value="ECO:0000318"/>
    <property type="project" value="GO_Central"/>
</dbReference>
<dbReference type="GO" id="GO:0043204">
    <property type="term" value="C:perikaryon"/>
    <property type="evidence" value="ECO:0000314"/>
    <property type="project" value="UniProtKB"/>
</dbReference>
<dbReference type="GO" id="GO:0003677">
    <property type="term" value="F:DNA binding"/>
    <property type="evidence" value="ECO:0007669"/>
    <property type="project" value="UniProtKB-KW"/>
</dbReference>
<dbReference type="GO" id="GO:0001228">
    <property type="term" value="F:DNA-binding transcription activator activity, RNA polymerase II-specific"/>
    <property type="evidence" value="ECO:0000318"/>
    <property type="project" value="GO_Central"/>
</dbReference>
<dbReference type="GO" id="GO:0001217">
    <property type="term" value="F:DNA-binding transcription repressor activity"/>
    <property type="evidence" value="ECO:0000315"/>
    <property type="project" value="UniProtKB"/>
</dbReference>
<dbReference type="GO" id="GO:0046982">
    <property type="term" value="F:protein heterodimerization activity"/>
    <property type="evidence" value="ECO:0007669"/>
    <property type="project" value="InterPro"/>
</dbReference>
<dbReference type="GO" id="GO:0000122">
    <property type="term" value="P:negative regulation of transcription by RNA polymerase II"/>
    <property type="evidence" value="ECO:0000315"/>
    <property type="project" value="UniProtKB"/>
</dbReference>
<dbReference type="GO" id="GO:0010468">
    <property type="term" value="P:regulation of gene expression"/>
    <property type="evidence" value="ECO:0000315"/>
    <property type="project" value="UniProtKB"/>
</dbReference>
<dbReference type="GO" id="GO:0006357">
    <property type="term" value="P:regulation of transcription by RNA polymerase II"/>
    <property type="evidence" value="ECO:0000318"/>
    <property type="project" value="GO_Central"/>
</dbReference>
<dbReference type="GO" id="GO:0009888">
    <property type="term" value="P:tissue development"/>
    <property type="evidence" value="ECO:0000315"/>
    <property type="project" value="UniProtKB"/>
</dbReference>
<dbReference type="CDD" id="cd22908">
    <property type="entry name" value="HFD_NFYC-like"/>
    <property type="match status" value="1"/>
</dbReference>
<dbReference type="FunFam" id="1.10.20.10:FF:000062">
    <property type="entry name" value="Nuclear transcription factor Y subunit C"/>
    <property type="match status" value="1"/>
</dbReference>
<dbReference type="Gene3D" id="1.10.20.10">
    <property type="entry name" value="Histone, subunit A"/>
    <property type="match status" value="1"/>
</dbReference>
<dbReference type="InterPro" id="IPR003958">
    <property type="entry name" value="CBFA_NFYB_domain"/>
</dbReference>
<dbReference type="InterPro" id="IPR009072">
    <property type="entry name" value="Histone-fold"/>
</dbReference>
<dbReference type="InterPro" id="IPR050568">
    <property type="entry name" value="Transcr_DNA_Rep_Reg"/>
</dbReference>
<dbReference type="PANTHER" id="PTHR10252">
    <property type="entry name" value="HISTONE-LIKE TRANSCRIPTION FACTOR CCAAT-RELATED"/>
    <property type="match status" value="1"/>
</dbReference>
<dbReference type="PANTHER" id="PTHR10252:SF8">
    <property type="entry name" value="NUCLEAR TRANSCRIPTION FACTOR Y SUBUNIT GAMMA"/>
    <property type="match status" value="1"/>
</dbReference>
<dbReference type="Pfam" id="PF00808">
    <property type="entry name" value="CBFD_NFYB_HMF"/>
    <property type="match status" value="1"/>
</dbReference>
<dbReference type="SUPFAM" id="SSF47113">
    <property type="entry name" value="Histone-fold"/>
    <property type="match status" value="1"/>
</dbReference>
<reference evidence="7" key="1">
    <citation type="journal article" date="1998" name="Science">
        <title>Genome sequence of the nematode C. elegans: a platform for investigating biology.</title>
        <authorList>
            <consortium name="The C. elegans sequencing consortium"/>
        </authorList>
    </citation>
    <scope>NUCLEOTIDE SEQUENCE [LARGE SCALE GENOMIC DNA]</scope>
    <source>
        <strain evidence="7">Bristol N2</strain>
    </source>
</reference>
<reference evidence="5" key="2">
    <citation type="journal article" date="2005" name="J. Mol. Histol.">
        <title>Expression of the CCAAT-binding factor NF-Y in Caenorhabditis elegans.</title>
        <authorList>
            <person name="Franchini A."/>
            <person name="Imbriano C."/>
            <person name="Peruzzi E."/>
            <person name="Mantovani R."/>
            <person name="Ottaviani E."/>
        </authorList>
    </citation>
    <scope>SUBCELLULAR LOCATION</scope>
    <scope>TISSUE SPECIFICITY</scope>
    <scope>DEVELOPMENTAL STAGE</scope>
</reference>
<reference evidence="5" key="3">
    <citation type="journal article" date="2007" name="Dev. Biol.">
        <title>Transcription factor NFY globally represses the expression of the C. elegans Hox gene Abdominal-B homolog egl-5.</title>
        <authorList>
            <person name="Deng H."/>
            <person name="Sun Y."/>
            <person name="Zhang Y."/>
            <person name="Luo X."/>
            <person name="Hou W."/>
            <person name="Yan L."/>
            <person name="Chen Y."/>
            <person name="Tian E."/>
            <person name="Han J."/>
            <person name="Zhang H."/>
        </authorList>
    </citation>
    <scope>FUNCTION</scope>
    <scope>IDENTIFICATION IN NF-Y COMPLEX</scope>
    <scope>INTERACTION WITH NFYB-1; NFYA-1 AND NFYA-2</scope>
    <scope>SUBCELLULAR LOCATION</scope>
    <scope>DEVELOPMENTAL STAGE</scope>
    <scope>DISRUPTION PHENOTYPE</scope>
</reference>
<reference evidence="5" key="4">
    <citation type="journal article" date="2013" name="Dev. Biol.">
        <title>The NF-Y complex negatively regulates Caenorhabditis elegans tbx-2 expression.</title>
        <authorList>
            <person name="Milton A.C."/>
            <person name="Packard A.V."/>
            <person name="Clary L."/>
            <person name="Okkema P.G."/>
        </authorList>
    </citation>
    <scope>FUNCTION</scope>
    <scope>DISRUPTION PHENOTYPE</scope>
</reference>
<reference evidence="5" key="5">
    <citation type="journal article" date="2015" name="G3 (Bethesda)">
        <title>Caenorhabditis elegans TBX-2 Directly Regulates Its Own Expression in a Negative Autoregulatory Loop.</title>
        <authorList>
            <person name="Milton A.C."/>
            <person name="Okkema P.G."/>
        </authorList>
    </citation>
    <scope>FUNCTION</scope>
</reference>
<feature type="chain" id="PRO_0000450335" description="Nuclear transcription factor Y subunit nfyc-1">
    <location>
        <begin position="1"/>
        <end position="232"/>
    </location>
</feature>
<feature type="region of interest" description="Disordered" evidence="1">
    <location>
        <begin position="191"/>
        <end position="232"/>
    </location>
</feature>
<feature type="compositionally biased region" description="Polar residues" evidence="1">
    <location>
        <begin position="220"/>
        <end position="232"/>
    </location>
</feature>
<feature type="splice variant" id="VSP_060607" description="In isoform b." evidence="5">
    <location>
        <begin position="1"/>
        <end position="35"/>
    </location>
</feature>
<evidence type="ECO:0000256" key="1">
    <source>
        <dbReference type="SAM" id="MobiDB-lite"/>
    </source>
</evidence>
<evidence type="ECO:0000269" key="2">
    <source>
    </source>
</evidence>
<evidence type="ECO:0000269" key="3">
    <source>
    </source>
</evidence>
<evidence type="ECO:0000269" key="4">
    <source>
    </source>
</evidence>
<evidence type="ECO:0000305" key="5"/>
<evidence type="ECO:0000305" key="6">
    <source>
    </source>
</evidence>
<evidence type="ECO:0000312" key="7">
    <source>
        <dbReference type="Proteomes" id="UP000001940"/>
    </source>
</evidence>
<evidence type="ECO:0000312" key="8">
    <source>
        <dbReference type="WormBase" id="F23F1.1a"/>
    </source>
</evidence>
<evidence type="ECO:0000312" key="9">
    <source>
        <dbReference type="WormBase" id="F23F1.1b"/>
    </source>
</evidence>
<comment type="function">
    <text evidence="3 4 6">Component of sequence-specific heterotrimeric transcription factor (nfya-1-NF-Y and nfya-2-NF-Y) complexes which specifically recognize a 5'-CCAAT-3' box motif found in the promoters of its target genes to regulate their expression and control cellular identity in particular tissue types (PubMed:17574230). In association with the components in the NF-Y complexes, represses the expression of the T-box transcription factor tbx-2 throughout larval development, which most likely restricts its expression to certain tissues (PubMed:23933492). May act to repress txb-2 expression in conjunction with tbx-2 itself, which has an autoregulatory role (Probable). In association with the components in the nfya-1-NF-Y complex, negatively regulates the expression of the homeobox protein egl-5 to spatially restrict its expression in tissues such as the head (PubMed:17574230). May regulate egl-5 expression in association with the mes-2-mes-3-mes-6 complex (PubMed:17574230).</text>
</comment>
<comment type="subunit">
    <text evidence="3">Forms two NF-Y heterotrimeric transcription factor complexes: the nfya-1-NF-Y complex is composed of nfya-1, nfyb-1 and nfyc-1, and the nfya-2-NF-Y complex is composed of nfya-2, nfyb-1 and nfyc-1 (PubMed:17574230). Interacts with nfyb-1; the interaction is direct and is required for the interaction with either nfya-1 or nfya-2, and subsequent binding of the complex to the 5'-CCAAT-3' box motif in DNA (PubMed:17574230).</text>
</comment>
<comment type="subcellular location">
    <subcellularLocation>
        <location evidence="3">Nucleus</location>
    </subcellularLocation>
    <subcellularLocation>
        <location evidence="2 3">Cytoplasm</location>
    </subcellularLocation>
    <subcellularLocation>
        <location evidence="2">Perikaryon</location>
    </subcellularLocation>
    <text evidence="2">Localizes to the cytoplasm of secretory cells and cell bodies of the small ganglia surrounding the pharynx.</text>
</comment>
<comment type="alternative products">
    <event type="alternative splicing"/>
    <isoform>
        <id>O17072-1</id>
        <name evidence="8">a</name>
        <sequence type="displayed"/>
    </isoform>
    <isoform>
        <id>O17072-2</id>
        <name evidence="9">b</name>
        <sequence type="described" ref="VSP_060607"/>
    </isoform>
</comment>
<comment type="tissue specificity">
    <text evidence="2">Expressed in certain parts of the gonads with high expression in fertilized oocytes in the uterus and mature oocytes from the distal to the proximal arm of the gonad, but weak expression in the syncytial ovaries and immature oocytes at the beginning of the proximal arm of the gonad (PubMed:15704008). Expressed in the excretory cell, secretory cells in the pharyngeal terminal bulb wall, in the small ganglia surrounding the pharynx and in the neurons running anteriorly to the sensory organs in the head (PubMed:15704008). Not expressed in the intestine, the hypodermis or body wall muscle surrounding the pseudocoelomic space (PubMed:15704008).</text>
</comment>
<comment type="developmental stage">
    <text evidence="2 3">Expressed in cells of the developing embryo (PubMed:15704008, PubMed:17574230). At the larval stages, weakly expressed in neurons and pharyngeal secretory cells (PubMed:15704008, PubMed:17574230). At larval stages also expressed in the developing hermaphrodite vulva and male tail (PubMed:17574230). Not expressed in the gonads in larval stages (PubMed:15704008).</text>
</comment>
<comment type="disruption phenotype">
    <text evidence="3 4">RNAi-mediated knockdown results in ectopic expression of the homeobox protein egl-5 in the head region (PubMed:17574230). RNAi-mediated knockdown results in ectopic expression of tbx-2 in the gut and seam cells of L4 stage larvae and adults (PubMed:23933492).</text>
</comment>
<comment type="similarity">
    <text evidence="5">Belongs to the NFYC/HAP5 subunit family.</text>
</comment>
<name>NFYC1_CAEEL</name>
<gene>
    <name evidence="8" type="primary">nfyc-1</name>
    <name evidence="8" type="ORF">F23F1.1</name>
</gene>
<sequence>MSQFPEVLDNNLLHAENNETAEYIQNDGTNQSEVFMEHPYTPNMHPINMPSIVEGAVHPYNNLIHHNDAIPPAKYASMRQMTEDFWREKKQKMTEISEEDMLNKSKNMSVPMARVKKIMRIDDDVRNFMIASDAPIFMAQAAEFFIEEMTAMGWQYVSEARRRILQKADIASAVQKSDQFDFLIDFLPPKTVPTTSTNGPGHMSEDSFQDPNMHSDFHQRTSNSSVNRSHHN</sequence>